<organism>
    <name type="scientific">Prochlorococcus marinus (strain AS9601)</name>
    <dbReference type="NCBI Taxonomy" id="146891"/>
    <lineage>
        <taxon>Bacteria</taxon>
        <taxon>Bacillati</taxon>
        <taxon>Cyanobacteriota</taxon>
        <taxon>Cyanophyceae</taxon>
        <taxon>Synechococcales</taxon>
        <taxon>Prochlorococcaceae</taxon>
        <taxon>Prochlorococcus</taxon>
    </lineage>
</organism>
<feature type="chain" id="PRO_0000353639" description="NAD(P)H-quinone oxidoreductase subunit O">
    <location>
        <begin position="1"/>
        <end position="78"/>
    </location>
</feature>
<proteinExistence type="inferred from homology"/>
<accession>A2BNR6</accession>
<dbReference type="EC" id="7.1.1.-" evidence="1"/>
<dbReference type="EMBL" id="CP000551">
    <property type="protein sequence ID" value="ABM69427.1"/>
    <property type="molecule type" value="Genomic_DNA"/>
</dbReference>
<dbReference type="RefSeq" id="WP_011817614.1">
    <property type="nucleotide sequence ID" value="NC_008816.1"/>
</dbReference>
<dbReference type="SMR" id="A2BNR6"/>
<dbReference type="STRING" id="146891.A9601_01391"/>
<dbReference type="KEGG" id="pmb:A9601_01391"/>
<dbReference type="eggNOG" id="ENOG5031XXZ">
    <property type="taxonomic scope" value="Bacteria"/>
</dbReference>
<dbReference type="HOGENOM" id="CLU_195299_0_0_3"/>
<dbReference type="OrthoDB" id="426633at2"/>
<dbReference type="Proteomes" id="UP000002590">
    <property type="component" value="Chromosome"/>
</dbReference>
<dbReference type="GO" id="GO:0031676">
    <property type="term" value="C:plasma membrane-derived thylakoid membrane"/>
    <property type="evidence" value="ECO:0007669"/>
    <property type="project" value="UniProtKB-SubCell"/>
</dbReference>
<dbReference type="GO" id="GO:0016655">
    <property type="term" value="F:oxidoreductase activity, acting on NAD(P)H, quinone or similar compound as acceptor"/>
    <property type="evidence" value="ECO:0007669"/>
    <property type="project" value="UniProtKB-UniRule"/>
</dbReference>
<dbReference type="GO" id="GO:0048038">
    <property type="term" value="F:quinone binding"/>
    <property type="evidence" value="ECO:0007669"/>
    <property type="project" value="UniProtKB-KW"/>
</dbReference>
<dbReference type="HAMAP" id="MF_01354">
    <property type="entry name" value="NDH1_NDH1O"/>
    <property type="match status" value="1"/>
</dbReference>
<dbReference type="InterPro" id="IPR020905">
    <property type="entry name" value="NdhO"/>
</dbReference>
<dbReference type="Pfam" id="PF11910">
    <property type="entry name" value="NdhO"/>
    <property type="match status" value="1"/>
</dbReference>
<comment type="function">
    <text evidence="1">NDH-1 shuttles electrons from an unknown electron donor, via FMN and iron-sulfur (Fe-S) centers, to quinones in the respiratory and/or the photosynthetic chain. The immediate electron acceptor for the enzyme in this species is believed to be plastoquinone. Couples the redox reaction to proton translocation, and thus conserves the redox energy in a proton gradient. Cyanobacterial NDH-1 also plays a role in inorganic carbon-concentration.</text>
</comment>
<comment type="catalytic activity">
    <reaction evidence="1">
        <text>a plastoquinone + NADH + (n+1) H(+)(in) = a plastoquinol + NAD(+) + n H(+)(out)</text>
        <dbReference type="Rhea" id="RHEA:42608"/>
        <dbReference type="Rhea" id="RHEA-COMP:9561"/>
        <dbReference type="Rhea" id="RHEA-COMP:9562"/>
        <dbReference type="ChEBI" id="CHEBI:15378"/>
        <dbReference type="ChEBI" id="CHEBI:17757"/>
        <dbReference type="ChEBI" id="CHEBI:57540"/>
        <dbReference type="ChEBI" id="CHEBI:57945"/>
        <dbReference type="ChEBI" id="CHEBI:62192"/>
    </reaction>
</comment>
<comment type="catalytic activity">
    <reaction evidence="1">
        <text>a plastoquinone + NADPH + (n+1) H(+)(in) = a plastoquinol + NADP(+) + n H(+)(out)</text>
        <dbReference type="Rhea" id="RHEA:42612"/>
        <dbReference type="Rhea" id="RHEA-COMP:9561"/>
        <dbReference type="Rhea" id="RHEA-COMP:9562"/>
        <dbReference type="ChEBI" id="CHEBI:15378"/>
        <dbReference type="ChEBI" id="CHEBI:17757"/>
        <dbReference type="ChEBI" id="CHEBI:57783"/>
        <dbReference type="ChEBI" id="CHEBI:58349"/>
        <dbReference type="ChEBI" id="CHEBI:62192"/>
    </reaction>
</comment>
<comment type="subunit">
    <text evidence="1">NDH-1 can be composed of about 15 different subunits; different subcomplexes with different compositions have been identified which probably have different functions.</text>
</comment>
<comment type="subcellular location">
    <subcellularLocation>
        <location evidence="1">Cellular thylakoid membrane</location>
        <topology evidence="1">Peripheral membrane protein</topology>
        <orientation evidence="1">Cytoplasmic side</orientation>
    </subcellularLocation>
</comment>
<comment type="similarity">
    <text evidence="1">Belongs to the complex I NdhO subunit family.</text>
</comment>
<keyword id="KW-0472">Membrane</keyword>
<keyword id="KW-0520">NAD</keyword>
<keyword id="KW-0521">NADP</keyword>
<keyword id="KW-0618">Plastoquinone</keyword>
<keyword id="KW-0874">Quinone</keyword>
<keyword id="KW-0793">Thylakoid</keyword>
<keyword id="KW-1278">Translocase</keyword>
<keyword id="KW-0813">Transport</keyword>
<name>NDHO_PROMS</name>
<sequence>MTDSIPKKPLKKGSLVFVDKENYIKSIEALASDNDLPNYVFEGPGEILSLKDEYAQVRWRRPVPDVWLKLDQLKEYTH</sequence>
<evidence type="ECO:0000255" key="1">
    <source>
        <dbReference type="HAMAP-Rule" id="MF_01354"/>
    </source>
</evidence>
<reference key="1">
    <citation type="journal article" date="2007" name="PLoS Genet.">
        <title>Patterns and implications of gene gain and loss in the evolution of Prochlorococcus.</title>
        <authorList>
            <person name="Kettler G.C."/>
            <person name="Martiny A.C."/>
            <person name="Huang K."/>
            <person name="Zucker J."/>
            <person name="Coleman M.L."/>
            <person name="Rodrigue S."/>
            <person name="Chen F."/>
            <person name="Lapidus A."/>
            <person name="Ferriera S."/>
            <person name="Johnson J."/>
            <person name="Steglich C."/>
            <person name="Church G.M."/>
            <person name="Richardson P."/>
            <person name="Chisholm S.W."/>
        </authorList>
    </citation>
    <scope>NUCLEOTIDE SEQUENCE [LARGE SCALE GENOMIC DNA]</scope>
    <source>
        <strain>AS9601</strain>
    </source>
</reference>
<gene>
    <name evidence="1" type="primary">ndhO</name>
    <name type="ordered locus">A9601_01391</name>
</gene>
<protein>
    <recommendedName>
        <fullName evidence="1">NAD(P)H-quinone oxidoreductase subunit O</fullName>
        <ecNumber evidence="1">7.1.1.-</ecNumber>
    </recommendedName>
    <alternativeName>
        <fullName evidence="1">NAD(P)H dehydrogenase I subunit O</fullName>
    </alternativeName>
    <alternativeName>
        <fullName>NDH-1 subunit O</fullName>
    </alternativeName>
    <alternativeName>
        <fullName>NDH-O</fullName>
    </alternativeName>
</protein>